<keyword id="KW-0119">Carbohydrate metabolism</keyword>
<keyword id="KW-0136">Cellulose degradation</keyword>
<keyword id="KW-0903">Direct protein sequencing</keyword>
<keyword id="KW-0326">Glycosidase</keyword>
<keyword id="KW-0378">Hydrolase</keyword>
<keyword id="KW-0624">Polysaccharide degradation</keyword>
<keyword id="KW-0964">Secreted</keyword>
<keyword id="KW-0858">Xylan degradation</keyword>
<dbReference type="EC" id="3.2.1.4"/>
<dbReference type="EC" id="3.2.1.8"/>
<dbReference type="CAZy" id="GH10">
    <property type="family name" value="Glycoside Hydrolase Family 10"/>
</dbReference>
<dbReference type="UniPathway" id="UPA00114"/>
<dbReference type="GO" id="GO:0005576">
    <property type="term" value="C:extracellular region"/>
    <property type="evidence" value="ECO:0000314"/>
    <property type="project" value="UniProtKB"/>
</dbReference>
<dbReference type="GO" id="GO:0008810">
    <property type="term" value="F:cellulase activity"/>
    <property type="evidence" value="ECO:0000314"/>
    <property type="project" value="UniProtKB"/>
</dbReference>
<dbReference type="GO" id="GO:0031176">
    <property type="term" value="F:endo-1,4-beta-xylanase activity"/>
    <property type="evidence" value="ECO:0000314"/>
    <property type="project" value="UniProtKB"/>
</dbReference>
<dbReference type="GO" id="GO:0030245">
    <property type="term" value="P:cellulose catabolic process"/>
    <property type="evidence" value="ECO:0000314"/>
    <property type="project" value="UniProtKB"/>
</dbReference>
<dbReference type="GO" id="GO:0045493">
    <property type="term" value="P:xylan catabolic process"/>
    <property type="evidence" value="ECO:0000314"/>
    <property type="project" value="UniProtKB"/>
</dbReference>
<reference evidence="4" key="1">
    <citation type="journal article" date="2005" name="Appl. Environ. Microbiol.">
        <title>Processive endoglucanase active in crystalline cellulose hydrolysis by the brown rot basidiomycete Gloeophyllum trabeum.</title>
        <authorList>
            <person name="Cohen R."/>
            <person name="Suzuki M.R."/>
            <person name="Hammel K.E."/>
        </authorList>
    </citation>
    <scope>PROTEIN SEQUENCE</scope>
    <scope>FUNCTION</scope>
    <scope>CATALYTIC ACTIVITY</scope>
    <scope>SUBCELLULAR LOCATION</scope>
    <source>
        <strain evidence="2">ATCC 11539 / Madison 617</strain>
    </source>
</reference>
<name>XYNA_GLOTR</name>
<comment type="function">
    <text evidence="2">Has xylanase, avicelase and cellobiohydrolase activity.</text>
</comment>
<comment type="catalytic activity">
    <reaction evidence="2">
        <text>Endohydrolysis of (1-&gt;4)-beta-D-xylosidic linkages in xylans.</text>
        <dbReference type="EC" id="3.2.1.8"/>
    </reaction>
</comment>
<comment type="catalytic activity">
    <reaction evidence="2">
        <text>Endohydrolysis of (1-&gt;4)-beta-D-glucosidic linkages in cellulose, lichenin and cereal beta-D-glucans.</text>
        <dbReference type="EC" id="3.2.1.4"/>
    </reaction>
</comment>
<comment type="pathway">
    <text>Glycan degradation; xylan degradation.</text>
</comment>
<comment type="subcellular location">
    <subcellularLocation>
        <location evidence="2">Secreted</location>
        <location evidence="2">Extracellular space</location>
    </subcellularLocation>
</comment>
<comment type="similarity">
    <text evidence="1">Belongs to the glycosyl hydrolase 10 (cellulase F) family.</text>
</comment>
<organism>
    <name type="scientific">Gloeophyllum trabeum</name>
    <name type="common">Brown rot fungus</name>
    <name type="synonym">Agaricus trabeus</name>
    <dbReference type="NCBI Taxonomy" id="104355"/>
    <lineage>
        <taxon>Eukaryota</taxon>
        <taxon>Fungi</taxon>
        <taxon>Dikarya</taxon>
        <taxon>Basidiomycota</taxon>
        <taxon>Agaricomycotina</taxon>
        <taxon>Agaricomycetes</taxon>
        <taxon>Gloeophyllales</taxon>
        <taxon>Gloeophyllaceae</taxon>
        <taxon>Gloeophyllum</taxon>
    </lineage>
</organism>
<sequence length="45" mass="4771">LYMGTATDNGATAMLNLVESLKYSWVPSTFSGQGAATPYDSNLVK</sequence>
<protein>
    <recommendedName>
        <fullName>Endo-1,4-beta-xylanase Xyn10A</fullName>
        <ecNumber>3.2.1.4</ecNumber>
        <ecNumber>3.2.1.8</ecNumber>
    </recommendedName>
</protein>
<feature type="chain" id="PRO_0000184066" description="Endo-1,4-beta-xylanase Xyn10A">
    <location>
        <begin position="1" status="less than"/>
        <end position="45" status="greater than"/>
    </location>
</feature>
<feature type="non-consecutive residues" evidence="3">
    <location>
        <begin position="10"/>
        <end position="11"/>
    </location>
</feature>
<feature type="non-consecutive residues" evidence="3">
    <location>
        <begin position="22"/>
        <end position="23"/>
    </location>
</feature>
<feature type="non-terminal residue" evidence="3">
    <location>
        <position position="1"/>
    </location>
</feature>
<feature type="non-terminal residue" evidence="3">
    <location>
        <position position="45"/>
    </location>
</feature>
<proteinExistence type="evidence at protein level"/>
<accession>P84195</accession>
<evidence type="ECO:0000255" key="1"/>
<evidence type="ECO:0000269" key="2">
    <source>
    </source>
</evidence>
<evidence type="ECO:0000303" key="3">
    <source>
    </source>
</evidence>
<evidence type="ECO:0000305" key="4"/>